<keyword id="KW-0238">DNA-binding</keyword>
<keyword id="KW-0479">Metal-binding</keyword>
<keyword id="KW-0597">Phosphoprotein</keyword>
<keyword id="KW-1185">Reference proteome</keyword>
<keyword id="KW-0862">Zinc</keyword>
<keyword id="KW-0863">Zinc-finger</keyword>
<dbReference type="EMBL" id="AK038184">
    <property type="protein sequence ID" value="BAC29945.1"/>
    <property type="molecule type" value="mRNA"/>
</dbReference>
<dbReference type="EMBL" id="AK050740">
    <property type="protein sequence ID" value="BAC34401.1"/>
    <property type="molecule type" value="mRNA"/>
</dbReference>
<dbReference type="CCDS" id="CCDS18982.1"/>
<dbReference type="RefSeq" id="NP_780361.2">
    <property type="nucleotide sequence ID" value="NM_175152.4"/>
</dbReference>
<dbReference type="SMR" id="Q8BJ25"/>
<dbReference type="FunCoup" id="Q8BJ25">
    <property type="interactions" value="29"/>
</dbReference>
<dbReference type="STRING" id="10090.ENSMUSP00000035240"/>
<dbReference type="PhosphoSitePlus" id="Q8BJ25"/>
<dbReference type="jPOST" id="Q8BJ25"/>
<dbReference type="PaxDb" id="10090-ENSMUSP00000035240"/>
<dbReference type="ProteomicsDB" id="258871"/>
<dbReference type="Antibodypedia" id="27449">
    <property type="antibodies" value="59 antibodies from 18 providers"/>
</dbReference>
<dbReference type="DNASU" id="69876"/>
<dbReference type="Ensembl" id="ENSMUST00000036680.8">
    <property type="protein sequence ID" value="ENSMUSP00000035240.2"/>
    <property type="gene ID" value="ENSMUSG00000039759.11"/>
</dbReference>
<dbReference type="GeneID" id="69876"/>
<dbReference type="KEGG" id="mmu:69876"/>
<dbReference type="UCSC" id="uc008vyu.2">
    <property type="organism name" value="mouse"/>
</dbReference>
<dbReference type="AGR" id="MGI:1917126"/>
<dbReference type="CTD" id="90326"/>
<dbReference type="MGI" id="MGI:1917126">
    <property type="gene designation" value="Thap3"/>
</dbReference>
<dbReference type="VEuPathDB" id="HostDB:ENSMUSG00000039759"/>
<dbReference type="eggNOG" id="ENOG502S14P">
    <property type="taxonomic scope" value="Eukaryota"/>
</dbReference>
<dbReference type="GeneTree" id="ENSGT00940000162344"/>
<dbReference type="InParanoid" id="Q8BJ25"/>
<dbReference type="OMA" id="ACKGHWG"/>
<dbReference type="OrthoDB" id="6496718at2759"/>
<dbReference type="PhylomeDB" id="Q8BJ25"/>
<dbReference type="TreeFam" id="TF330127"/>
<dbReference type="BioGRID-ORCS" id="69876">
    <property type="hits" value="0 hits in 76 CRISPR screens"/>
</dbReference>
<dbReference type="ChiTaRS" id="Thap3">
    <property type="organism name" value="mouse"/>
</dbReference>
<dbReference type="PRO" id="PR:Q8BJ25"/>
<dbReference type="Proteomes" id="UP000000589">
    <property type="component" value="Chromosome 4"/>
</dbReference>
<dbReference type="RNAct" id="Q8BJ25">
    <property type="molecule type" value="protein"/>
</dbReference>
<dbReference type="Bgee" id="ENSMUSG00000039759">
    <property type="expression patterns" value="Expressed in ear vesicle and 219 other cell types or tissues"/>
</dbReference>
<dbReference type="ExpressionAtlas" id="Q8BJ25">
    <property type="expression patterns" value="baseline and differential"/>
</dbReference>
<dbReference type="GO" id="GO:0003677">
    <property type="term" value="F:DNA binding"/>
    <property type="evidence" value="ECO:0007669"/>
    <property type="project" value="UniProtKB-KW"/>
</dbReference>
<dbReference type="GO" id="GO:0008270">
    <property type="term" value="F:zinc ion binding"/>
    <property type="evidence" value="ECO:0007669"/>
    <property type="project" value="UniProtKB-KW"/>
</dbReference>
<dbReference type="GO" id="GO:0045944">
    <property type="term" value="P:positive regulation of transcription by RNA polymerase II"/>
    <property type="evidence" value="ECO:0007669"/>
    <property type="project" value="Ensembl"/>
</dbReference>
<dbReference type="InterPro" id="IPR026520">
    <property type="entry name" value="THAP3"/>
</dbReference>
<dbReference type="InterPro" id="IPR006612">
    <property type="entry name" value="THAP_Znf"/>
</dbReference>
<dbReference type="PANTHER" id="PTHR47120">
    <property type="entry name" value="THAP DOMAIN-CONTAINING PROTEIN 3"/>
    <property type="match status" value="1"/>
</dbReference>
<dbReference type="PANTHER" id="PTHR47120:SF1">
    <property type="entry name" value="THAP DOMAIN-CONTAINING PROTEIN 3"/>
    <property type="match status" value="1"/>
</dbReference>
<dbReference type="Pfam" id="PF05485">
    <property type="entry name" value="THAP"/>
    <property type="match status" value="1"/>
</dbReference>
<dbReference type="SMART" id="SM00692">
    <property type="entry name" value="DM3"/>
    <property type="match status" value="1"/>
</dbReference>
<dbReference type="SMART" id="SM00980">
    <property type="entry name" value="THAP"/>
    <property type="match status" value="1"/>
</dbReference>
<dbReference type="SUPFAM" id="SSF57716">
    <property type="entry name" value="Glucocorticoid receptor-like (DNA-binding domain)"/>
    <property type="match status" value="1"/>
</dbReference>
<dbReference type="PROSITE" id="PS50950">
    <property type="entry name" value="ZF_THAP"/>
    <property type="match status" value="1"/>
</dbReference>
<comment type="function">
    <text evidence="1">Component of a THAP1/THAP3-HCFC1-OGT complex that is required for the regulation of the transcriptional activity of RRM1.</text>
</comment>
<comment type="subunit">
    <text evidence="1">Component of a THAP1/THAP3-HCFC1-OGT complex that contains at least, either THAP1 or THAP3, HCFC1 and OGT. Interacts directly with OGT and HCFC1 (via its HBM) (By similarity).</text>
</comment>
<comment type="tissue specificity">
    <text evidence="5">Highest levels in heart, liver and kidney. Lower levels in brain and lung.</text>
</comment>
<gene>
    <name type="primary">Thap3</name>
</gene>
<reference key="1">
    <citation type="journal article" date="2005" name="Science">
        <title>The transcriptional landscape of the mammalian genome.</title>
        <authorList>
            <person name="Carninci P."/>
            <person name="Kasukawa T."/>
            <person name="Katayama S."/>
            <person name="Gough J."/>
            <person name="Frith M.C."/>
            <person name="Maeda N."/>
            <person name="Oyama R."/>
            <person name="Ravasi T."/>
            <person name="Lenhard B."/>
            <person name="Wells C."/>
            <person name="Kodzius R."/>
            <person name="Shimokawa K."/>
            <person name="Bajic V.B."/>
            <person name="Brenner S.E."/>
            <person name="Batalov S."/>
            <person name="Forrest A.R."/>
            <person name="Zavolan M."/>
            <person name="Davis M.J."/>
            <person name="Wilming L.G."/>
            <person name="Aidinis V."/>
            <person name="Allen J.E."/>
            <person name="Ambesi-Impiombato A."/>
            <person name="Apweiler R."/>
            <person name="Aturaliya R.N."/>
            <person name="Bailey T.L."/>
            <person name="Bansal M."/>
            <person name="Baxter L."/>
            <person name="Beisel K.W."/>
            <person name="Bersano T."/>
            <person name="Bono H."/>
            <person name="Chalk A.M."/>
            <person name="Chiu K.P."/>
            <person name="Choudhary V."/>
            <person name="Christoffels A."/>
            <person name="Clutterbuck D.R."/>
            <person name="Crowe M.L."/>
            <person name="Dalla E."/>
            <person name="Dalrymple B.P."/>
            <person name="de Bono B."/>
            <person name="Della Gatta G."/>
            <person name="di Bernardo D."/>
            <person name="Down T."/>
            <person name="Engstrom P."/>
            <person name="Fagiolini M."/>
            <person name="Faulkner G."/>
            <person name="Fletcher C.F."/>
            <person name="Fukushima T."/>
            <person name="Furuno M."/>
            <person name="Futaki S."/>
            <person name="Gariboldi M."/>
            <person name="Georgii-Hemming P."/>
            <person name="Gingeras T.R."/>
            <person name="Gojobori T."/>
            <person name="Green R.E."/>
            <person name="Gustincich S."/>
            <person name="Harbers M."/>
            <person name="Hayashi Y."/>
            <person name="Hensch T.K."/>
            <person name="Hirokawa N."/>
            <person name="Hill D."/>
            <person name="Huminiecki L."/>
            <person name="Iacono M."/>
            <person name="Ikeo K."/>
            <person name="Iwama A."/>
            <person name="Ishikawa T."/>
            <person name="Jakt M."/>
            <person name="Kanapin A."/>
            <person name="Katoh M."/>
            <person name="Kawasawa Y."/>
            <person name="Kelso J."/>
            <person name="Kitamura H."/>
            <person name="Kitano H."/>
            <person name="Kollias G."/>
            <person name="Krishnan S.P."/>
            <person name="Kruger A."/>
            <person name="Kummerfeld S.K."/>
            <person name="Kurochkin I.V."/>
            <person name="Lareau L.F."/>
            <person name="Lazarevic D."/>
            <person name="Lipovich L."/>
            <person name="Liu J."/>
            <person name="Liuni S."/>
            <person name="McWilliam S."/>
            <person name="Madan Babu M."/>
            <person name="Madera M."/>
            <person name="Marchionni L."/>
            <person name="Matsuda H."/>
            <person name="Matsuzawa S."/>
            <person name="Miki H."/>
            <person name="Mignone F."/>
            <person name="Miyake S."/>
            <person name="Morris K."/>
            <person name="Mottagui-Tabar S."/>
            <person name="Mulder N."/>
            <person name="Nakano N."/>
            <person name="Nakauchi H."/>
            <person name="Ng P."/>
            <person name="Nilsson R."/>
            <person name="Nishiguchi S."/>
            <person name="Nishikawa S."/>
            <person name="Nori F."/>
            <person name="Ohara O."/>
            <person name="Okazaki Y."/>
            <person name="Orlando V."/>
            <person name="Pang K.C."/>
            <person name="Pavan W.J."/>
            <person name="Pavesi G."/>
            <person name="Pesole G."/>
            <person name="Petrovsky N."/>
            <person name="Piazza S."/>
            <person name="Reed J."/>
            <person name="Reid J.F."/>
            <person name="Ring B.Z."/>
            <person name="Ringwald M."/>
            <person name="Rost B."/>
            <person name="Ruan Y."/>
            <person name="Salzberg S.L."/>
            <person name="Sandelin A."/>
            <person name="Schneider C."/>
            <person name="Schoenbach C."/>
            <person name="Sekiguchi K."/>
            <person name="Semple C.A."/>
            <person name="Seno S."/>
            <person name="Sessa L."/>
            <person name="Sheng Y."/>
            <person name="Shibata Y."/>
            <person name="Shimada H."/>
            <person name="Shimada K."/>
            <person name="Silva D."/>
            <person name="Sinclair B."/>
            <person name="Sperling S."/>
            <person name="Stupka E."/>
            <person name="Sugiura K."/>
            <person name="Sultana R."/>
            <person name="Takenaka Y."/>
            <person name="Taki K."/>
            <person name="Tammoja K."/>
            <person name="Tan S.L."/>
            <person name="Tang S."/>
            <person name="Taylor M.S."/>
            <person name="Tegner J."/>
            <person name="Teichmann S.A."/>
            <person name="Ueda H.R."/>
            <person name="van Nimwegen E."/>
            <person name="Verardo R."/>
            <person name="Wei C.L."/>
            <person name="Yagi K."/>
            <person name="Yamanishi H."/>
            <person name="Zabarovsky E."/>
            <person name="Zhu S."/>
            <person name="Zimmer A."/>
            <person name="Hide W."/>
            <person name="Bult C."/>
            <person name="Grimmond S.M."/>
            <person name="Teasdale R.D."/>
            <person name="Liu E.T."/>
            <person name="Brusic V."/>
            <person name="Quackenbush J."/>
            <person name="Wahlestedt C."/>
            <person name="Mattick J.S."/>
            <person name="Hume D.A."/>
            <person name="Kai C."/>
            <person name="Sasaki D."/>
            <person name="Tomaru Y."/>
            <person name="Fukuda S."/>
            <person name="Kanamori-Katayama M."/>
            <person name="Suzuki M."/>
            <person name="Aoki J."/>
            <person name="Arakawa T."/>
            <person name="Iida J."/>
            <person name="Imamura K."/>
            <person name="Itoh M."/>
            <person name="Kato T."/>
            <person name="Kawaji H."/>
            <person name="Kawagashira N."/>
            <person name="Kawashima T."/>
            <person name="Kojima M."/>
            <person name="Kondo S."/>
            <person name="Konno H."/>
            <person name="Nakano K."/>
            <person name="Ninomiya N."/>
            <person name="Nishio T."/>
            <person name="Okada M."/>
            <person name="Plessy C."/>
            <person name="Shibata K."/>
            <person name="Shiraki T."/>
            <person name="Suzuki S."/>
            <person name="Tagami M."/>
            <person name="Waki K."/>
            <person name="Watahiki A."/>
            <person name="Okamura-Oho Y."/>
            <person name="Suzuki H."/>
            <person name="Kawai J."/>
            <person name="Hayashizaki Y."/>
        </authorList>
    </citation>
    <scope>NUCLEOTIDE SEQUENCE [LARGE SCALE MRNA]</scope>
    <source>
        <strain>C57BL/6J</strain>
        <tissue>Thymus</tissue>
    </source>
</reference>
<reference key="2">
    <citation type="journal article" date="2010" name="J. Biol. Chem.">
        <title>The THAP-zinc finger protein THAP1 associates with coactivator HCF-1 and O-GlcNAc transferase: a link between DYT6 and DYT3 dystonias.</title>
        <authorList>
            <person name="Mazars R."/>
            <person name="Gonzalez-de-Peredo A."/>
            <person name="Cayrol C."/>
            <person name="Lavigne A.C."/>
            <person name="Vogel J.L."/>
            <person name="Ortega N."/>
            <person name="Lacroix C."/>
            <person name="Gautier V."/>
            <person name="Huet G."/>
            <person name="Ray A."/>
            <person name="Monsarrat B."/>
            <person name="Kristie T.M."/>
            <person name="Girard J.P."/>
        </authorList>
    </citation>
    <scope>TISSUE SPECIFICITY</scope>
</reference>
<evidence type="ECO:0000250" key="1"/>
<evidence type="ECO:0000250" key="2">
    <source>
        <dbReference type="UniProtKB" id="Q8WTV1"/>
    </source>
</evidence>
<evidence type="ECO:0000255" key="3">
    <source>
        <dbReference type="PROSITE-ProRule" id="PRU00309"/>
    </source>
</evidence>
<evidence type="ECO:0000256" key="4">
    <source>
        <dbReference type="SAM" id="MobiDB-lite"/>
    </source>
</evidence>
<evidence type="ECO:0000269" key="5">
    <source>
    </source>
</evidence>
<evidence type="ECO:0000305" key="6"/>
<protein>
    <recommendedName>
        <fullName>THAP domain-containing protein 3</fullName>
    </recommendedName>
</protein>
<proteinExistence type="evidence at transcript level"/>
<organism>
    <name type="scientific">Mus musculus</name>
    <name type="common">Mouse</name>
    <dbReference type="NCBI Taxonomy" id="10090"/>
    <lineage>
        <taxon>Eukaryota</taxon>
        <taxon>Metazoa</taxon>
        <taxon>Chordata</taxon>
        <taxon>Craniata</taxon>
        <taxon>Vertebrata</taxon>
        <taxon>Euteleostomi</taxon>
        <taxon>Mammalia</taxon>
        <taxon>Eutheria</taxon>
        <taxon>Euarchontoglires</taxon>
        <taxon>Glires</taxon>
        <taxon>Rodentia</taxon>
        <taxon>Myomorpha</taxon>
        <taxon>Muroidea</taxon>
        <taxon>Muridae</taxon>
        <taxon>Murinae</taxon>
        <taxon>Mus</taxon>
        <taxon>Mus</taxon>
    </lineage>
</organism>
<name>THAP3_MOUSE</name>
<sequence>MPKSCAARQCCNRYSSRRKQLTFHRFPFSRPELLREWVLNIGRADFKPKQHTVICSEHFRPECFSAFGNRKNLKHNAVPTVFAFQNPTEVCPEVGAGGDSSGRNMDTTLEELQPPTPEGPVQQVLPDREAMEATEAAGLPASPLGLKRPLPGQPSDHSYALSDLDTLKKKLFLTLKENKRLRKRLKAQRLLLRRTCGRLRAYREGQPGPRARRPAQGS</sequence>
<accession>Q8BJ25</accession>
<accession>Q8BII6</accession>
<feature type="chain" id="PRO_0000068645" description="THAP domain-containing protein 3">
    <location>
        <begin position="1"/>
        <end position="218"/>
    </location>
</feature>
<feature type="zinc finger region" description="THAP-type" evidence="3">
    <location>
        <begin position="1"/>
        <end position="82"/>
    </location>
</feature>
<feature type="region of interest" description="Disordered" evidence="4">
    <location>
        <begin position="97"/>
        <end position="120"/>
    </location>
</feature>
<feature type="region of interest" description="Disordered" evidence="4">
    <location>
        <begin position="133"/>
        <end position="154"/>
    </location>
</feature>
<feature type="short sequence motif" description="HCFC1-binding motif (HBM)" evidence="1">
    <location>
        <begin position="156"/>
        <end position="159"/>
    </location>
</feature>
<feature type="modified residue" description="Phosphoserine" evidence="2">
    <location>
        <position position="100"/>
    </location>
</feature>
<feature type="sequence conflict" description="In Ref. 1; BAC34401." evidence="6" ref="1">
    <original>H</original>
    <variation>R</variation>
    <location>
        <position position="157"/>
    </location>
</feature>